<proteinExistence type="inferred from homology"/>
<reference key="1">
    <citation type="submission" date="2006-03" db="EMBL/GenBank/DDBJ databases">
        <title>Complete genome sequence of Francisella tularensis LVS (Live Vaccine Strain).</title>
        <authorList>
            <person name="Chain P."/>
            <person name="Larimer F."/>
            <person name="Land M."/>
            <person name="Stilwagen S."/>
            <person name="Larsson P."/>
            <person name="Bearden S."/>
            <person name="Chu M."/>
            <person name="Oyston P."/>
            <person name="Forsman M."/>
            <person name="Andersson S."/>
            <person name="Lindler L."/>
            <person name="Titball R."/>
            <person name="Garcia E."/>
        </authorList>
    </citation>
    <scope>NUCLEOTIDE SEQUENCE [LARGE SCALE GENOMIC DNA]</scope>
    <source>
        <strain>LVS</strain>
    </source>
</reference>
<keyword id="KW-1185">Reference proteome</keyword>
<keyword id="KW-0687">Ribonucleoprotein</keyword>
<keyword id="KW-0689">Ribosomal protein</keyword>
<keyword id="KW-0694">RNA-binding</keyword>
<keyword id="KW-0699">rRNA-binding</keyword>
<organism>
    <name type="scientific">Francisella tularensis subsp. holarctica (strain LVS)</name>
    <dbReference type="NCBI Taxonomy" id="376619"/>
    <lineage>
        <taxon>Bacteria</taxon>
        <taxon>Pseudomonadati</taxon>
        <taxon>Pseudomonadota</taxon>
        <taxon>Gammaproteobacteria</taxon>
        <taxon>Thiotrichales</taxon>
        <taxon>Francisellaceae</taxon>
        <taxon>Francisella</taxon>
    </lineage>
</organism>
<protein>
    <recommendedName>
        <fullName evidence="1">Small ribosomal subunit protein uS8</fullName>
    </recommendedName>
    <alternativeName>
        <fullName evidence="2">30S ribosomal protein S8</fullName>
    </alternativeName>
</protein>
<dbReference type="EMBL" id="AM233362">
    <property type="protein sequence ID" value="CAJ78691.1"/>
    <property type="molecule type" value="Genomic_DNA"/>
</dbReference>
<dbReference type="RefSeq" id="WP_003014356.1">
    <property type="nucleotide sequence ID" value="NZ_CP009694.1"/>
</dbReference>
<dbReference type="SMR" id="Q2A5F6"/>
<dbReference type="GeneID" id="75264247"/>
<dbReference type="KEGG" id="ftl:FTL_0250"/>
<dbReference type="Proteomes" id="UP000001944">
    <property type="component" value="Chromosome"/>
</dbReference>
<dbReference type="GO" id="GO:1990904">
    <property type="term" value="C:ribonucleoprotein complex"/>
    <property type="evidence" value="ECO:0007669"/>
    <property type="project" value="UniProtKB-KW"/>
</dbReference>
<dbReference type="GO" id="GO:0005840">
    <property type="term" value="C:ribosome"/>
    <property type="evidence" value="ECO:0007669"/>
    <property type="project" value="UniProtKB-KW"/>
</dbReference>
<dbReference type="GO" id="GO:0019843">
    <property type="term" value="F:rRNA binding"/>
    <property type="evidence" value="ECO:0007669"/>
    <property type="project" value="UniProtKB-UniRule"/>
</dbReference>
<dbReference type="GO" id="GO:0003735">
    <property type="term" value="F:structural constituent of ribosome"/>
    <property type="evidence" value="ECO:0007669"/>
    <property type="project" value="InterPro"/>
</dbReference>
<dbReference type="GO" id="GO:0006412">
    <property type="term" value="P:translation"/>
    <property type="evidence" value="ECO:0007669"/>
    <property type="project" value="UniProtKB-UniRule"/>
</dbReference>
<dbReference type="FunFam" id="3.30.1490.10:FF:000001">
    <property type="entry name" value="30S ribosomal protein S8"/>
    <property type="match status" value="1"/>
</dbReference>
<dbReference type="Gene3D" id="3.30.1370.30">
    <property type="match status" value="1"/>
</dbReference>
<dbReference type="Gene3D" id="3.30.1490.10">
    <property type="match status" value="1"/>
</dbReference>
<dbReference type="HAMAP" id="MF_01302_B">
    <property type="entry name" value="Ribosomal_uS8_B"/>
    <property type="match status" value="1"/>
</dbReference>
<dbReference type="InterPro" id="IPR000630">
    <property type="entry name" value="Ribosomal_uS8"/>
</dbReference>
<dbReference type="InterPro" id="IPR047863">
    <property type="entry name" value="Ribosomal_uS8_CS"/>
</dbReference>
<dbReference type="InterPro" id="IPR035987">
    <property type="entry name" value="Ribosomal_uS8_sf"/>
</dbReference>
<dbReference type="NCBIfam" id="NF001109">
    <property type="entry name" value="PRK00136.1"/>
    <property type="match status" value="1"/>
</dbReference>
<dbReference type="PANTHER" id="PTHR11758">
    <property type="entry name" value="40S RIBOSOMAL PROTEIN S15A"/>
    <property type="match status" value="1"/>
</dbReference>
<dbReference type="Pfam" id="PF00410">
    <property type="entry name" value="Ribosomal_S8"/>
    <property type="match status" value="1"/>
</dbReference>
<dbReference type="SUPFAM" id="SSF56047">
    <property type="entry name" value="Ribosomal protein S8"/>
    <property type="match status" value="1"/>
</dbReference>
<dbReference type="PROSITE" id="PS00053">
    <property type="entry name" value="RIBOSOMAL_S8"/>
    <property type="match status" value="1"/>
</dbReference>
<accession>Q2A5F6</accession>
<comment type="function">
    <text evidence="1">One of the primary rRNA binding proteins, it binds directly to 16S rRNA central domain where it helps coordinate assembly of the platform of the 30S subunit.</text>
</comment>
<comment type="subunit">
    <text evidence="1">Part of the 30S ribosomal subunit. Contacts proteins S5 and S12.</text>
</comment>
<comment type="similarity">
    <text evidence="1">Belongs to the universal ribosomal protein uS8 family.</text>
</comment>
<sequence>MSMQDPIADMFTRIRNGLSAEKEFVSVPFSKIKMEIANFLVNEGYIKSCSKGTTSMGHPSIEIELKYHAGAPVIEMIKRVSRPSLRIYKSHADLPKVYGGYGVAIVSTSKGLVSDRKARDLGVGGEIIGYVA</sequence>
<feature type="chain" id="PRO_0000290838" description="Small ribosomal subunit protein uS8">
    <location>
        <begin position="1"/>
        <end position="132"/>
    </location>
</feature>
<name>RS8_FRATH</name>
<evidence type="ECO:0000255" key="1">
    <source>
        <dbReference type="HAMAP-Rule" id="MF_01302"/>
    </source>
</evidence>
<evidence type="ECO:0000305" key="2"/>
<gene>
    <name evidence="1" type="primary">rpsH</name>
    <name type="ordered locus">FTL_0250</name>
</gene>